<comment type="function">
    <text evidence="2 5 9 11">Involved in the gluconeogenesis. Catalyzes the conversion of oxaloacetate (OAA) to phosphoenolpyruvate (PEP) through direct phosphoryl transfer between the nucleoside triphosphate and OAA.</text>
</comment>
<comment type="catalytic activity">
    <reaction evidence="2 9">
        <text>oxaloacetate + ATP = phosphoenolpyruvate + ADP + CO2</text>
        <dbReference type="Rhea" id="RHEA:18617"/>
        <dbReference type="ChEBI" id="CHEBI:16452"/>
        <dbReference type="ChEBI" id="CHEBI:16526"/>
        <dbReference type="ChEBI" id="CHEBI:30616"/>
        <dbReference type="ChEBI" id="CHEBI:58702"/>
        <dbReference type="ChEBI" id="CHEBI:456216"/>
        <dbReference type="EC" id="4.1.1.49"/>
    </reaction>
</comment>
<comment type="cofactor">
    <cofactor evidence="2 5 6 15 16 17">
        <name>Mn(2+)</name>
        <dbReference type="ChEBI" id="CHEBI:29035"/>
    </cofactor>
    <text evidence="2 5 6 15 16 17">Binds 1 Mn(2+) ion per subunit.</text>
</comment>
<comment type="activity regulation">
    <text evidence="4 5 9 14">Allosterically activated by calcium. It may represent the only case of a monomeric, allosteric enzyme.</text>
</comment>
<comment type="biophysicochemical properties">
    <kinetics>
        <KM evidence="6 9">3.8 uM for manganese (at 31 degrees Celsius and pH 7.5)</KM>
        <KM evidence="6 9">0.11 mM for calcium (at 31 degrees Celsius and pH 7.5)</KM>
        <KM evidence="6 9">0.31 mM for OAA (at 31 degrees Celsius and pH 7.5)</KM>
        <KM evidence="6 9">0.51 mM for OAA (at pH 7.5)</KM>
        <KM evidence="6 9">1.4 mM for magnesium (at 31 degrees Celsius and pH 7.5)</KM>
        <KM evidence="6 9">11 mM for PEP (at pH 7.5)</KM>
    </kinetics>
</comment>
<comment type="pathway">
    <text evidence="2">Carbohydrate biosynthesis; gluconeogenesis.</text>
</comment>
<comment type="subunit">
    <text evidence="2 3 4 5 6 9 13 15 16 17">Monomer.</text>
</comment>
<comment type="subcellular location">
    <subcellularLocation>
        <location>Cytoplasm</location>
    </subcellularLocation>
</comment>
<comment type="induction">
    <text evidence="8 12">Induced upon entry into stationary phase and by cyclic AMP (cAMP). Repressed by glucose (catabolite repression) and by CsrA.</text>
</comment>
<comment type="mass spectrometry"/>
<comment type="similarity">
    <text evidence="2">Belongs to the phosphoenolpyruvate carboxykinase (ATP) family.</text>
</comment>
<comment type="sequence caution" evidence="18">
    <conflict type="frameshift">
        <sequence resource="EMBL-CDS" id="AAA24301"/>
    </conflict>
    <text>Translation N-terminally extended.</text>
</comment>
<proteinExistence type="evidence at protein level"/>
<dbReference type="EC" id="4.1.1.49" evidence="2"/>
<dbReference type="EMBL" id="M59823">
    <property type="protein sequence ID" value="AAA24301.1"/>
    <property type="status" value="ALT_FRAME"/>
    <property type="molecule type" value="Genomic_DNA"/>
</dbReference>
<dbReference type="EMBL" id="U18997">
    <property type="protein sequence ID" value="AAA58200.1"/>
    <property type="molecule type" value="Genomic_DNA"/>
</dbReference>
<dbReference type="EMBL" id="U00096">
    <property type="protein sequence ID" value="AAC76428.1"/>
    <property type="molecule type" value="Genomic_DNA"/>
</dbReference>
<dbReference type="EMBL" id="AP009048">
    <property type="protein sequence ID" value="BAE77888.1"/>
    <property type="molecule type" value="Genomic_DNA"/>
</dbReference>
<dbReference type="EMBL" id="J01656">
    <property type="status" value="NOT_ANNOTATED_CDS"/>
    <property type="molecule type" value="Unassigned_RNA"/>
</dbReference>
<dbReference type="EMBL" id="S76268">
    <property type="protein sequence ID" value="AAB33745.2"/>
    <property type="molecule type" value="Genomic_DNA"/>
</dbReference>
<dbReference type="EMBL" id="S76269">
    <property type="protein sequence ID" value="AAB33746.2"/>
    <property type="molecule type" value="Genomic_DNA"/>
</dbReference>
<dbReference type="EMBL" id="U21325">
    <property type="protein sequence ID" value="AAA95999.1"/>
    <property type="molecule type" value="Genomic_DNA"/>
</dbReference>
<dbReference type="PIR" id="F65135">
    <property type="entry name" value="F65135"/>
</dbReference>
<dbReference type="RefSeq" id="NP_417862.1">
    <property type="nucleotide sequence ID" value="NC_000913.3"/>
</dbReference>
<dbReference type="RefSeq" id="WP_001265681.1">
    <property type="nucleotide sequence ID" value="NZ_STEB01000004.1"/>
</dbReference>
<dbReference type="PDB" id="1AQ2">
    <property type="method" value="X-ray"/>
    <property type="resolution" value="1.90 A"/>
    <property type="chains" value="A=1-540"/>
</dbReference>
<dbReference type="PDB" id="1AYL">
    <property type="method" value="X-ray"/>
    <property type="resolution" value="1.80 A"/>
    <property type="chains" value="A=1-540"/>
</dbReference>
<dbReference type="PDB" id="1K3C">
    <property type="method" value="X-ray"/>
    <property type="resolution" value="2.00 A"/>
    <property type="chains" value="A=1-540"/>
</dbReference>
<dbReference type="PDB" id="1K3D">
    <property type="method" value="X-ray"/>
    <property type="resolution" value="2.00 A"/>
    <property type="chains" value="A=1-540"/>
</dbReference>
<dbReference type="PDB" id="1OEN">
    <property type="method" value="X-ray"/>
    <property type="resolution" value="1.90 A"/>
    <property type="chains" value="A=1-538"/>
</dbReference>
<dbReference type="PDB" id="1OS1">
    <property type="method" value="X-ray"/>
    <property type="resolution" value="1.80 A"/>
    <property type="chains" value="A=1-540"/>
</dbReference>
<dbReference type="PDB" id="2OLQ">
    <property type="method" value="X-ray"/>
    <property type="resolution" value="1.94 A"/>
    <property type="chains" value="A=1-540"/>
</dbReference>
<dbReference type="PDB" id="2OLR">
    <property type="method" value="X-ray"/>
    <property type="resolution" value="1.60 A"/>
    <property type="chains" value="A=1-540"/>
</dbReference>
<dbReference type="PDB" id="2PXZ">
    <property type="method" value="X-ray"/>
    <property type="resolution" value="2.23 A"/>
    <property type="chains" value="X=1-540"/>
</dbReference>
<dbReference type="PDB" id="2PY7">
    <property type="method" value="X-ray"/>
    <property type="resolution" value="2.20 A"/>
    <property type="chains" value="X=1-540"/>
</dbReference>
<dbReference type="PDB" id="6ASI">
    <property type="method" value="X-ray"/>
    <property type="resolution" value="1.79 A"/>
    <property type="chains" value="A=1-540"/>
</dbReference>
<dbReference type="PDB" id="6ASM">
    <property type="method" value="X-ray"/>
    <property type="resolution" value="1.55 A"/>
    <property type="chains" value="A=1-540"/>
</dbReference>
<dbReference type="PDB" id="6ASN">
    <property type="method" value="X-ray"/>
    <property type="resolution" value="1.55 A"/>
    <property type="chains" value="A=1-540"/>
</dbReference>
<dbReference type="PDB" id="6AT2">
    <property type="method" value="X-ray"/>
    <property type="resolution" value="1.44 A"/>
    <property type="chains" value="A=1-540"/>
</dbReference>
<dbReference type="PDB" id="6AT3">
    <property type="method" value="X-ray"/>
    <property type="resolution" value="1.46 A"/>
    <property type="chains" value="A/B=1-540"/>
</dbReference>
<dbReference type="PDB" id="6AT4">
    <property type="method" value="X-ray"/>
    <property type="resolution" value="1.33 A"/>
    <property type="chains" value="A/B=1-540"/>
</dbReference>
<dbReference type="PDB" id="6COM">
    <property type="method" value="X-ray"/>
    <property type="resolution" value="2.30 A"/>
    <property type="chains" value="A=1-540"/>
</dbReference>
<dbReference type="PDB" id="6CRT">
    <property type="method" value="X-ray"/>
    <property type="resolution" value="2.00 A"/>
    <property type="chains" value="A=1-540"/>
</dbReference>
<dbReference type="PDB" id="6V2L">
    <property type="method" value="X-ray"/>
    <property type="resolution" value="1.70 A"/>
    <property type="chains" value="A=1-540"/>
</dbReference>
<dbReference type="PDB" id="6V2M">
    <property type="method" value="X-ray"/>
    <property type="resolution" value="1.66 A"/>
    <property type="chains" value="A=1-540"/>
</dbReference>
<dbReference type="PDB" id="6V2N">
    <property type="method" value="X-ray"/>
    <property type="resolution" value="1.65 A"/>
    <property type="chains" value="A=1-540"/>
</dbReference>
<dbReference type="PDBsum" id="1AQ2"/>
<dbReference type="PDBsum" id="1AYL"/>
<dbReference type="PDBsum" id="1K3C"/>
<dbReference type="PDBsum" id="1K3D"/>
<dbReference type="PDBsum" id="1OEN"/>
<dbReference type="PDBsum" id="1OS1"/>
<dbReference type="PDBsum" id="2OLQ"/>
<dbReference type="PDBsum" id="2OLR"/>
<dbReference type="PDBsum" id="2PXZ"/>
<dbReference type="PDBsum" id="2PY7"/>
<dbReference type="PDBsum" id="6ASI"/>
<dbReference type="PDBsum" id="6ASM"/>
<dbReference type="PDBsum" id="6ASN"/>
<dbReference type="PDBsum" id="6AT2"/>
<dbReference type="PDBsum" id="6AT3"/>
<dbReference type="PDBsum" id="6AT4"/>
<dbReference type="PDBsum" id="6COM"/>
<dbReference type="PDBsum" id="6CRT"/>
<dbReference type="PDBsum" id="6V2L"/>
<dbReference type="PDBsum" id="6V2M"/>
<dbReference type="PDBsum" id="6V2N"/>
<dbReference type="SMR" id="P22259"/>
<dbReference type="BioGRID" id="4262181">
    <property type="interactions" value="22"/>
</dbReference>
<dbReference type="FunCoup" id="P22259">
    <property type="interactions" value="577"/>
</dbReference>
<dbReference type="IntAct" id="P22259">
    <property type="interactions" value="4"/>
</dbReference>
<dbReference type="STRING" id="511145.b3403"/>
<dbReference type="iPTMnet" id="P22259"/>
<dbReference type="jPOST" id="P22259"/>
<dbReference type="PaxDb" id="511145-b3403"/>
<dbReference type="EnsemblBacteria" id="AAC76428">
    <property type="protein sequence ID" value="AAC76428"/>
    <property type="gene ID" value="b3403"/>
</dbReference>
<dbReference type="GeneID" id="945667"/>
<dbReference type="KEGG" id="ecj:JW3366"/>
<dbReference type="KEGG" id="eco:b3403"/>
<dbReference type="KEGG" id="ecoc:C3026_18465"/>
<dbReference type="PATRIC" id="fig|1411691.4.peg.3326"/>
<dbReference type="EchoBASE" id="EB0682"/>
<dbReference type="eggNOG" id="COG1866">
    <property type="taxonomic scope" value="Bacteria"/>
</dbReference>
<dbReference type="HOGENOM" id="CLU_018247_0_1_6"/>
<dbReference type="InParanoid" id="P22259"/>
<dbReference type="OMA" id="MRYAGEM"/>
<dbReference type="OrthoDB" id="9806325at2"/>
<dbReference type="PhylomeDB" id="P22259"/>
<dbReference type="BioCyc" id="EcoCyc:PEPCARBOXYKIN-MONOMER"/>
<dbReference type="BioCyc" id="MetaCyc:PEPCARBOXYKIN-MONOMER"/>
<dbReference type="BRENDA" id="4.1.1.49">
    <property type="organism ID" value="2026"/>
</dbReference>
<dbReference type="SABIO-RK" id="P22259"/>
<dbReference type="UniPathway" id="UPA00138"/>
<dbReference type="EvolutionaryTrace" id="P22259"/>
<dbReference type="PRO" id="PR:P22259"/>
<dbReference type="Proteomes" id="UP000000625">
    <property type="component" value="Chromosome"/>
</dbReference>
<dbReference type="GO" id="GO:0005829">
    <property type="term" value="C:cytosol"/>
    <property type="evidence" value="ECO:0000314"/>
    <property type="project" value="EcoCyc"/>
</dbReference>
<dbReference type="GO" id="GO:0005524">
    <property type="term" value="F:ATP binding"/>
    <property type="evidence" value="ECO:0007669"/>
    <property type="project" value="UniProtKB-UniRule"/>
</dbReference>
<dbReference type="GO" id="GO:0005509">
    <property type="term" value="F:calcium ion binding"/>
    <property type="evidence" value="ECO:0000314"/>
    <property type="project" value="EcoCyc"/>
</dbReference>
<dbReference type="GO" id="GO:0000287">
    <property type="term" value="F:magnesium ion binding"/>
    <property type="evidence" value="ECO:0000314"/>
    <property type="project" value="EcoCyc"/>
</dbReference>
<dbReference type="GO" id="GO:0004612">
    <property type="term" value="F:phosphoenolpyruvate carboxykinase (ATP) activity"/>
    <property type="evidence" value="ECO:0000314"/>
    <property type="project" value="EcoCyc"/>
</dbReference>
<dbReference type="GO" id="GO:0006094">
    <property type="term" value="P:gluconeogenesis"/>
    <property type="evidence" value="ECO:0000315"/>
    <property type="project" value="EcoCyc"/>
</dbReference>
<dbReference type="CDD" id="cd00484">
    <property type="entry name" value="PEPCK_ATP"/>
    <property type="match status" value="1"/>
</dbReference>
<dbReference type="FunFam" id="2.170.8.10:FF:000001">
    <property type="entry name" value="Phosphoenolpyruvate carboxykinase (ATP)"/>
    <property type="match status" value="1"/>
</dbReference>
<dbReference type="FunFam" id="3.40.449.10:FF:000001">
    <property type="entry name" value="Phosphoenolpyruvate carboxykinase (ATP)"/>
    <property type="match status" value="1"/>
</dbReference>
<dbReference type="Gene3D" id="3.90.228.20">
    <property type="match status" value="1"/>
</dbReference>
<dbReference type="Gene3D" id="3.40.449.10">
    <property type="entry name" value="Phosphoenolpyruvate Carboxykinase, domain 1"/>
    <property type="match status" value="1"/>
</dbReference>
<dbReference type="Gene3D" id="2.170.8.10">
    <property type="entry name" value="Phosphoenolpyruvate Carboxykinase, domain 2"/>
    <property type="match status" value="1"/>
</dbReference>
<dbReference type="HAMAP" id="MF_00453">
    <property type="entry name" value="PEPCK_ATP"/>
    <property type="match status" value="1"/>
</dbReference>
<dbReference type="InterPro" id="IPR001272">
    <property type="entry name" value="PEP_carboxykinase_ATP"/>
</dbReference>
<dbReference type="InterPro" id="IPR013035">
    <property type="entry name" value="PEP_carboxykinase_C"/>
</dbReference>
<dbReference type="InterPro" id="IPR008210">
    <property type="entry name" value="PEP_carboxykinase_N"/>
</dbReference>
<dbReference type="InterPro" id="IPR015994">
    <property type="entry name" value="PEPCK_ATP_CS"/>
</dbReference>
<dbReference type="NCBIfam" id="TIGR00224">
    <property type="entry name" value="pckA"/>
    <property type="match status" value="1"/>
</dbReference>
<dbReference type="NCBIfam" id="NF006819">
    <property type="entry name" value="PRK09344.1-1"/>
    <property type="match status" value="1"/>
</dbReference>
<dbReference type="NCBIfam" id="NF006820">
    <property type="entry name" value="PRK09344.1-2"/>
    <property type="match status" value="1"/>
</dbReference>
<dbReference type="NCBIfam" id="NF006821">
    <property type="entry name" value="PRK09344.1-3"/>
    <property type="match status" value="1"/>
</dbReference>
<dbReference type="PANTHER" id="PTHR30031:SF0">
    <property type="entry name" value="PHOSPHOENOLPYRUVATE CARBOXYKINASE (ATP)"/>
    <property type="match status" value="1"/>
</dbReference>
<dbReference type="PANTHER" id="PTHR30031">
    <property type="entry name" value="PHOSPHOENOLPYRUVATE CARBOXYKINASE ATP"/>
    <property type="match status" value="1"/>
</dbReference>
<dbReference type="Pfam" id="PF01293">
    <property type="entry name" value="PEPCK_ATP"/>
    <property type="match status" value="1"/>
</dbReference>
<dbReference type="PIRSF" id="PIRSF006294">
    <property type="entry name" value="PEP_crbxkin"/>
    <property type="match status" value="1"/>
</dbReference>
<dbReference type="SUPFAM" id="SSF68923">
    <property type="entry name" value="PEP carboxykinase N-terminal domain"/>
    <property type="match status" value="1"/>
</dbReference>
<dbReference type="SUPFAM" id="SSF53795">
    <property type="entry name" value="PEP carboxykinase-like"/>
    <property type="match status" value="1"/>
</dbReference>
<dbReference type="PROSITE" id="PS00532">
    <property type="entry name" value="PEPCK_ATP"/>
    <property type="match status" value="1"/>
</dbReference>
<evidence type="ECO:0000250" key="1"/>
<evidence type="ECO:0000255" key="2">
    <source>
        <dbReference type="HAMAP-Rule" id="MF_00453"/>
    </source>
</evidence>
<evidence type="ECO:0000269" key="3">
    <source>
    </source>
</evidence>
<evidence type="ECO:0000269" key="4">
    <source>
    </source>
</evidence>
<evidence type="ECO:0000269" key="5">
    <source>
    </source>
</evidence>
<evidence type="ECO:0000269" key="6">
    <source>
    </source>
</evidence>
<evidence type="ECO:0000269" key="7">
    <source>
    </source>
</evidence>
<evidence type="ECO:0000269" key="8">
    <source>
    </source>
</evidence>
<evidence type="ECO:0000269" key="9">
    <source>
    </source>
</evidence>
<evidence type="ECO:0000269" key="10">
    <source>
    </source>
</evidence>
<evidence type="ECO:0000269" key="11">
    <source>
    </source>
</evidence>
<evidence type="ECO:0000269" key="12">
    <source>
    </source>
</evidence>
<evidence type="ECO:0000269" key="13">
    <source>
    </source>
</evidence>
<evidence type="ECO:0000269" key="14">
    <source>
    </source>
</evidence>
<evidence type="ECO:0000269" key="15">
    <source>
    </source>
</evidence>
<evidence type="ECO:0000269" key="16">
    <source ref="20"/>
</evidence>
<evidence type="ECO:0000269" key="17">
    <source ref="21"/>
</evidence>
<evidence type="ECO:0000305" key="18"/>
<evidence type="ECO:0007829" key="19">
    <source>
        <dbReference type="PDB" id="1AQ2"/>
    </source>
</evidence>
<evidence type="ECO:0007829" key="20">
    <source>
        <dbReference type="PDB" id="1OEN"/>
    </source>
</evidence>
<evidence type="ECO:0007829" key="21">
    <source>
        <dbReference type="PDB" id="6AT2"/>
    </source>
</evidence>
<evidence type="ECO:0007829" key="22">
    <source>
        <dbReference type="PDB" id="6AT4"/>
    </source>
</evidence>
<accession>P22259</accession>
<accession>Q2M768</accession>
<sequence>MRVNNGLTPQELEAYGISDVHDIVYNPSYDLLYQEELDPSLTGYERGVLTNLGAVAVDTGIFTGRSPKDKYIVRDDTTRDTFWWADKGKGKNDNKPLSPETWQHLKGLVTRQLSGKRLFVVDAFCGANPDTRLSVRFITEVAWQAHFVKNMFIRPSDEELAGFKPDFIVMNGAKCTNPQWKEQGLNSENFVAFNLTERMQLIGGTWYGGEMKKGMFSMMNYLLPLKGIASMHCSANVGEKGDVAVFFGLSGTGKTTLSTDPKRRLIGDDEHGWDDDGVFNFEGGCYAKTIKLSKEAEPEIYNAIRRDALLENVTVREDGTIDFDDGSKTENTRVSYPIYHIDNIVKPVSKAGHATKVIFLTADAFGVLPPVSRLTADQTQYHFLSGFTAKLAGTERGITEPTPTFSACFGAAFLSLHPTQYAEVLVKRMQAAGAQAYLVNTGWNGTGKRISIKDTRAIIDAILNGSLDNAETFTLPMFNLAIPTELPGVDTKILDPRNTYASPEQWQEKAETLAKLFIDNFDKYTDTPAGAALVAAGPKL</sequence>
<reference key="1">
    <citation type="journal article" date="1990" name="J. Bacteriol.">
        <title>Sequence of the pckA gene of Escherichia coli K-12: relevance to genetic and allosteric regulation and homology of E. coli phosphoenolpyruvate carboxykinase with the enzymes from Trypanosoma brucei and Saccharomyces cerevisiae.</title>
        <authorList>
            <person name="Medina V."/>
            <person name="Pontarollo R."/>
            <person name="Glaeske D."/>
            <person name="Tabel H."/>
            <person name="Goldie H."/>
        </authorList>
    </citation>
    <scope>NUCLEOTIDE SEQUENCE [GENOMIC DNA]</scope>
    <scope>PARTIAL PROTEIN SEQUENCE</scope>
    <scope>FUNCTION</scope>
    <scope>ACTIVITY REGULATION</scope>
    <scope>COFACTOR</scope>
    <scope>SUBUNIT</scope>
    <source>
        <strain>K12</strain>
    </source>
</reference>
<reference key="2">
    <citation type="journal article" date="1997" name="Science">
        <title>The complete genome sequence of Escherichia coli K-12.</title>
        <authorList>
            <person name="Blattner F.R."/>
            <person name="Plunkett G. III"/>
            <person name="Bloch C.A."/>
            <person name="Perna N.T."/>
            <person name="Burland V."/>
            <person name="Riley M."/>
            <person name="Collado-Vides J."/>
            <person name="Glasner J.D."/>
            <person name="Rode C.K."/>
            <person name="Mayhew G.F."/>
            <person name="Gregor J."/>
            <person name="Davis N.W."/>
            <person name="Kirkpatrick H.A."/>
            <person name="Goeden M.A."/>
            <person name="Rose D.J."/>
            <person name="Mau B."/>
            <person name="Shao Y."/>
        </authorList>
    </citation>
    <scope>NUCLEOTIDE SEQUENCE [LARGE SCALE GENOMIC DNA]</scope>
    <source>
        <strain>K12 / MG1655 / ATCC 47076</strain>
    </source>
</reference>
<reference key="3">
    <citation type="journal article" date="2006" name="Mol. Syst. Biol.">
        <title>Highly accurate genome sequences of Escherichia coli K-12 strains MG1655 and W3110.</title>
        <authorList>
            <person name="Hayashi K."/>
            <person name="Morooka N."/>
            <person name="Yamamoto Y."/>
            <person name="Fujita K."/>
            <person name="Isono K."/>
            <person name="Choi S."/>
            <person name="Ohtsubo E."/>
            <person name="Baba T."/>
            <person name="Wanner B.L."/>
            <person name="Mori H."/>
            <person name="Horiuchi T."/>
        </authorList>
    </citation>
    <scope>NUCLEOTIDE SEQUENCE [LARGE SCALE GENOMIC DNA]</scope>
    <source>
        <strain>K12 / W3110 / ATCC 27325 / DSM 5911</strain>
    </source>
</reference>
<reference key="4">
    <citation type="journal article" date="1982" name="J. Biol. Chem.">
        <title>Osmoregulation of gene expression. II. DNA sequence of the envZ gene of the ompB operon of Escherichia coli and characterization of its gene product.</title>
        <authorList>
            <person name="Mizuno T."/>
            <person name="Wurtzel E.T."/>
            <person name="Inouye M."/>
        </authorList>
    </citation>
    <scope>NUCLEOTIDE SEQUENCE [GENOMIC DNA] OF 439-540</scope>
</reference>
<reference key="5">
    <citation type="journal article" date="1995" name="Mol. Microbiol.">
        <title>The global regulatory protein FruR modulates the direction of carbon flow in Escherichia coli.</title>
        <authorList>
            <person name="Ramseier T.M."/>
            <person name="Bledig S."/>
            <person name="Michotey V."/>
            <person name="Feghali R."/>
            <person name="Saier M.H. Jr."/>
        </authorList>
    </citation>
    <scope>NUCLEOTIDE SEQUENCE [GENOMIC DNA] OF 1-39</scope>
    <source>
        <strain>K12</strain>
    </source>
</reference>
<reference key="6">
    <citation type="journal article" date="1995" name="J. Bacteriol.">
        <title>A mutant phosphoenolpyruvate carboxykinase in Escherichia coli conferring oxaloacetate decarboxylase activity.</title>
        <authorList>
            <person name="Hou S.-Y."/>
            <person name="Chao Y.-P."/>
            <person name="Liao J.C."/>
        </authorList>
    </citation>
    <scope>PROTEIN SEQUENCE OF 242-290</scope>
    <scope>MUTAGENESIS OF ASP-268 AND GLY-284</scope>
</reference>
<reference key="7">
    <citation type="journal article" date="1997" name="Electrophoresis">
        <title>Comparing the predicted and observed properties of proteins encoded in the genome of Escherichia coli K-12.</title>
        <authorList>
            <person name="Link A.J."/>
            <person name="Robison K."/>
            <person name="Church G.M."/>
        </authorList>
    </citation>
    <scope>PROTEIN SEQUENCE OF 1-12</scope>
    <source>
        <strain>K12 / EMG2</strain>
    </source>
</reference>
<reference key="8">
    <citation type="journal article" date="1980" name="J. Biol. Chem.">
        <title>Allosteric control by calcium and mechanism of desensitization of phosphoenolpyruvate carboxykinase of Escherichia coli.</title>
        <authorList>
            <person name="Goldie A.H."/>
            <person name="Sanwal B.D."/>
        </authorList>
    </citation>
    <scope>FUNCTION</scope>
    <scope>CATALYTIC ACTIVITY</scope>
    <scope>ACTIVITY REGULATION</scope>
    <scope>BIOPHYSICOCHEMICAL PROPERTIES</scope>
    <scope>SUBUNIT</scope>
</reference>
<reference key="9">
    <citation type="journal article" date="1984" name="J. Bacteriol.">
        <title>Regulation of transcription of the Escherichia coli phosphoenolpyruvate carboxykinase locus: studies with pck-lacZ operon fusions.</title>
        <authorList>
            <person name="Goldie H."/>
        </authorList>
    </citation>
    <scope>INDUCTION</scope>
</reference>
<reference key="10">
    <citation type="journal article" date="1993" name="J. Bacteriol.">
        <title>Control of gluconeogenic growth by pps and pck in Escherichia coli.</title>
        <authorList>
            <person name="Chao Y.P."/>
            <person name="Patnaik R."/>
            <person name="Roof W.D."/>
            <person name="Young R.F."/>
            <person name="Liao J.C."/>
        </authorList>
    </citation>
    <scope>FUNCTION IN GLUCONEOGENESIS</scope>
</reference>
<reference key="11">
    <citation type="journal article" date="1993" name="J. Bacteriol.">
        <title>Identification and molecular characterization of csrA, a pleiotropic gene from Escherichia coli that affects glycogen biosynthesis, gluconeogenesis, cell size, and surface properties.</title>
        <authorList>
            <person name="Romeo T."/>
            <person name="Gong M."/>
            <person name="Liu M.-Y."/>
            <person name="Brun-Zinkernagel A.-M."/>
        </authorList>
    </citation>
    <scope>INDUCTION</scope>
</reference>
<reference key="12">
    <citation type="journal article" date="1997" name="Electrophoresis">
        <title>Escherichia coli proteome analysis using the gene-protein database.</title>
        <authorList>
            <person name="VanBogelen R.A."/>
            <person name="Abshire K.Z."/>
            <person name="Moldover B."/>
            <person name="Olson E.R."/>
            <person name="Neidhardt F.C."/>
        </authorList>
    </citation>
    <scope>IDENTIFICATION BY 2D-GEL</scope>
</reference>
<reference key="13">
    <citation type="journal article" date="2009" name="Mol. Cell. Proteomics">
        <title>Lysine acetylation is a highly abundant and evolutionarily conserved modification in Escherichia coli.</title>
        <authorList>
            <person name="Zhang J."/>
            <person name="Sprung R."/>
            <person name="Pei J."/>
            <person name="Tan X."/>
            <person name="Kim S."/>
            <person name="Zhu H."/>
            <person name="Liu C.F."/>
            <person name="Grishin N.V."/>
            <person name="Zhao Y."/>
        </authorList>
    </citation>
    <scope>ACETYLATION [LARGE SCALE ANALYSIS] AT LYS-87 AND LYS-523</scope>
    <scope>IDENTIFICATION BY MASS SPECTROMETRY</scope>
    <source>
        <strain>K12 / JW1106</strain>
        <strain>K12 / MG1655 / ATCC 47076</strain>
    </source>
</reference>
<reference key="14">
    <citation type="journal article" date="1996" name="J. Mol. Biol.">
        <title>Crystal structure of Escherichia coli phosphoenolpyruvate carboxykinase: a new structural family with the P-loop nucleoside triphosphate hydrolase fold.</title>
        <authorList>
            <person name="Matte A."/>
            <person name="Goldie H."/>
            <person name="Sweet R.M."/>
            <person name="Delbaere L.T.J."/>
        </authorList>
    </citation>
    <scope>X-RAY CRYSTALLOGRAPHY (1.9 ANGSTROMS) OF 1-538</scope>
    <scope>ACTIVITY REGULATION</scope>
    <scope>MASS SPECTROMETRY</scope>
</reference>
<reference key="15">
    <citation type="journal article" date="1996" name="Nat. Struct. Biol.">
        <title>Snapshot of an enzyme reaction intermediate in the structure of the ATP-Mg2+-oxalate ternary complex of Escherichia coli PEP carboxykinase.</title>
        <authorList>
            <person name="Tari L.W."/>
            <person name="Matte A."/>
            <person name="Pugazhenthi U."/>
            <person name="Goldie H."/>
            <person name="Delbaere L.T.J."/>
        </authorList>
    </citation>
    <scope>X-RAY CRYSTALLOGRAPHY (1.8 ANGSTROMS) IN COMPLEX WITH ATP AND SUBSTRATE ANALOGS</scope>
    <scope>REACTION MECHANISM</scope>
</reference>
<reference key="16">
    <citation type="journal article" date="1997" name="Nat. Struct. Biol.">
        <title>Mg(2+)-Mn(2+) clusters in enzyme-catalyzed phosphoryl-transfer reactions.</title>
        <authorList>
            <person name="Tari L.W."/>
            <person name="Matte A."/>
            <person name="Goldie H."/>
            <person name="Delbaere L.T."/>
        </authorList>
    </citation>
    <scope>X-RAY CRYSTALLOGRAPHY (1.9 ANGSTROMS) IN COMPLEX WITH ATP</scope>
    <scope>MANGANESE AND SUBSTRATE</scope>
    <scope>COFACTOR</scope>
    <scope>SUBUNIT</scope>
</reference>
<reference key="17">
    <citation type="journal article" date="2001" name="J. Mol. Biol.">
        <title>The phosphoryl-transfer mechanism of Escherichia coli phosphoenolpyruvate carboxykinase from the use of AlF(3).</title>
        <authorList>
            <person name="Sudom A.M."/>
            <person name="Prasad L."/>
            <person name="Goldie H."/>
            <person name="Delbaere L.T."/>
        </authorList>
    </citation>
    <scope>X-RAY CRYSTALLOGRAPHY (2.00 ANGSTROMS) IN COMPLEX WITH ATP ANALOGS AND SUBSTRATE</scope>
    <scope>REACTION MECHANISM</scope>
</reference>
<reference key="18">
    <citation type="journal article" date="2003" name="J. Bacteriol.">
        <title>Mechanisms of activation of phosphoenolpyruvate carboxykinase from Escherichia coli by Ca2+ and of desensitization by trypsin.</title>
        <authorList>
            <person name="Sudom A."/>
            <person name="Walters R."/>
            <person name="Pastushok L."/>
            <person name="Goldie D."/>
            <person name="Prasad L."/>
            <person name="Delbaere L.T."/>
            <person name="Goldie H."/>
        </authorList>
    </citation>
    <scope>X-RAY CRYSTALLOGRAPHY (1.80 ANGSTROMS) IN COMPLEX WITH ATP</scope>
    <scope>CALCIUM AND SUBSTRATE</scope>
    <scope>ACTIVITY REGULATION</scope>
    <scope>REACTION MECHANISM</scope>
    <scope>SUBUNIT</scope>
</reference>
<reference key="19">
    <citation type="journal article" date="2007" name="Int. J. Biochem. Cell Biol.">
        <title>How does an enzyme recognize CO2?</title>
        <authorList>
            <person name="Cotelesage J.J."/>
            <person name="Puttick J."/>
            <person name="Goldie H."/>
            <person name="Rajabi B."/>
            <person name="Novakovski B."/>
            <person name="Delbaere L.T."/>
        </authorList>
    </citation>
    <scope>X-RAY CRYSTALLOGRAPHY (1.60 ANGSTROMS) IN COMPLEX WITH ATP</scope>
    <scope>MANGANESE AND SUBSTRATE ANALOGS</scope>
    <scope>MUTAGENESIS OF ARG-65</scope>
    <scope>COFACTOR</scope>
    <scope>BIOPHYSICOCHEMICAL PROPERTIES</scope>
</reference>
<reference key="20">
    <citation type="submission" date="2007-05" db="PDB data bank">
        <title>Crystal structure of E. coli phosphoenolpyruvate carboxykinase (PEPCK) complexed with ATP, Mg2+, Mn2+, carbon dioxide and oxaloacetate.</title>
        <authorList>
            <person name="Delbaere L.T.J."/>
            <person name="Cotelesage J.J.H."/>
            <person name="Goldie H."/>
        </authorList>
    </citation>
    <scope>X-RAY CRYSTALLOGRAPHY (2.23 ANGSTROMS) IN COMPLEX WITH ATP</scope>
    <scope>MANGANESE AND SUBSTRATE ANALOGS</scope>
    <scope>COFACTOR</scope>
</reference>
<reference key="21">
    <citation type="submission" date="2007-05" db="PDB data bank">
        <title>Crystal structure of E. coli phosphoenolpyruvate carboxykinase mutant Lys213Ser.</title>
        <authorList>
            <person name="Delbaere L.T.J."/>
            <person name="Cotelesage J.J.H."/>
            <person name="Goldie H."/>
        </authorList>
    </citation>
    <scope>X-RAY CRYSTALLOGRAPHY (2.20 ANGSTROMS) IN COMPLEX WITH ATP AND MANGANESE</scope>
    <scope>COFACTOR</scope>
</reference>
<feature type="chain" id="PRO_0000203818" description="Phosphoenolpyruvate carboxykinase (ATP)">
    <location>
        <begin position="1"/>
        <end position="540"/>
    </location>
</feature>
<feature type="binding site" evidence="2 3">
    <location>
        <position position="65"/>
    </location>
    <ligand>
        <name>substrate</name>
    </ligand>
</feature>
<feature type="binding site" evidence="1">
    <location>
        <position position="149"/>
    </location>
    <ligand>
        <name>Ca(2+)</name>
        <dbReference type="ChEBI" id="CHEBI:29108"/>
    </ligand>
</feature>
<feature type="binding site" evidence="1">
    <location>
        <position position="150"/>
    </location>
    <ligand>
        <name>Ca(2+)</name>
        <dbReference type="ChEBI" id="CHEBI:29108"/>
    </ligand>
</feature>
<feature type="binding site" evidence="1">
    <location>
        <position position="152"/>
    </location>
    <ligand>
        <name>Ca(2+)</name>
        <dbReference type="ChEBI" id="CHEBI:29108"/>
    </ligand>
</feature>
<feature type="binding site" evidence="2 3">
    <location>
        <position position="207"/>
    </location>
    <ligand>
        <name>substrate</name>
    </ligand>
</feature>
<feature type="binding site" evidence="2 4 6 13 15 16 17">
    <location>
        <position position="213"/>
    </location>
    <ligand>
        <name>ATP</name>
        <dbReference type="ChEBI" id="CHEBI:30616"/>
    </ligand>
</feature>
<feature type="binding site" evidence="2 17">
    <location>
        <position position="213"/>
    </location>
    <ligand>
        <name>Mn(2+)</name>
        <dbReference type="ChEBI" id="CHEBI:29035"/>
    </ligand>
</feature>
<feature type="binding site" evidence="2 3">
    <location>
        <position position="213"/>
    </location>
    <ligand>
        <name>substrate</name>
    </ligand>
</feature>
<feature type="binding site" evidence="2 4 6 13 15 16 17">
    <location>
        <position position="232"/>
    </location>
    <ligand>
        <name>ATP</name>
        <dbReference type="ChEBI" id="CHEBI:30616"/>
    </ligand>
</feature>
<feature type="binding site" evidence="2 17">
    <location>
        <position position="232"/>
    </location>
    <ligand>
        <name>Mn(2+)</name>
        <dbReference type="ChEBI" id="CHEBI:29035"/>
    </ligand>
</feature>
<feature type="binding site" evidence="2 4 6 13 15 16 17">
    <location>
        <begin position="248"/>
        <end position="256"/>
    </location>
    <ligand>
        <name>ATP</name>
        <dbReference type="ChEBI" id="CHEBI:30616"/>
    </ligand>
</feature>
<feature type="binding site" evidence="2 17">
    <location>
        <position position="269"/>
    </location>
    <ligand>
        <name>Mn(2+)</name>
        <dbReference type="ChEBI" id="CHEBI:29035"/>
    </ligand>
</feature>
<feature type="binding site" evidence="1">
    <location>
        <position position="283"/>
    </location>
    <ligand>
        <name>Ca(2+)</name>
        <dbReference type="ChEBI" id="CHEBI:29108"/>
    </ligand>
</feature>
<feature type="binding site" evidence="2 4 6 13 15 16 17">
    <location>
        <position position="297"/>
    </location>
    <ligand>
        <name>ATP</name>
        <dbReference type="ChEBI" id="CHEBI:30616"/>
    </ligand>
</feature>
<feature type="binding site" evidence="2 4 6 13 15 16 17">
    <location>
        <position position="333"/>
    </location>
    <ligand>
        <name>ATP</name>
        <dbReference type="ChEBI" id="CHEBI:30616"/>
    </ligand>
</feature>
<feature type="binding site" evidence="2 3">
    <location>
        <position position="333"/>
    </location>
    <ligand>
        <name>substrate</name>
    </ligand>
</feature>
<feature type="binding site" evidence="2 4 6 13 15 16 17">
    <location>
        <begin position="449"/>
        <end position="450"/>
    </location>
    <ligand>
        <name>ATP</name>
        <dbReference type="ChEBI" id="CHEBI:30616"/>
    </ligand>
</feature>
<feature type="binding site" evidence="2 4 6 13 15 16 17">
    <location>
        <position position="455"/>
    </location>
    <ligand>
        <name>ATP</name>
        <dbReference type="ChEBI" id="CHEBI:30616"/>
    </ligand>
</feature>
<feature type="modified residue" description="N6-acetyllysine" evidence="2 7">
    <location>
        <position position="87"/>
    </location>
</feature>
<feature type="modified residue" description="N6-acetyllysine" evidence="2 7">
    <location>
        <position position="523"/>
    </location>
</feature>
<feature type="mutagenesis site" description="Slightly lower catalytic efficiency compared to wild-type and the affinity binding for OAA is 330-fold higher than for wild-type." evidence="6">
    <original>R</original>
    <variation>Q</variation>
    <location>
        <position position="65"/>
    </location>
</feature>
<feature type="mutagenesis site" description="In PCK51; altered-activity mutant that catalyzes the conversion from oxaloacetate to pyruvate (OAA decarboxylase activity)." evidence="10">
    <original>D</original>
    <variation>N</variation>
    <location>
        <position position="268"/>
    </location>
</feature>
<feature type="mutagenesis site" description="In PCK53; shows reduced-activity." evidence="10">
    <original>G</original>
    <variation>S</variation>
    <location>
        <position position="284"/>
    </location>
</feature>
<feature type="sequence conflict" description="In Ref. 1; AAA24301." evidence="18" ref="1">
    <original>PKDKYI</original>
    <variation>QKISIS</variation>
    <location>
        <begin position="67"/>
        <end position="72"/>
    </location>
</feature>
<feature type="sequence conflict" description="In Ref. 1; AA sequence." evidence="18" ref="1">
    <original>AFN</original>
    <variation>R</variation>
    <location>
        <begin position="192"/>
        <end position="194"/>
    </location>
</feature>
<feature type="sequence conflict" description="In Ref. 1; AA sequence." evidence="18" ref="1">
    <original>ERMQLIG</original>
    <variation>DRAHAADC</variation>
    <location>
        <begin position="197"/>
        <end position="203"/>
    </location>
</feature>
<feature type="sequence conflict" description="In Ref. 1; AAA24301." evidence="18" ref="1">
    <original>C</original>
    <variation>S</variation>
    <location>
        <position position="233"/>
    </location>
</feature>
<feature type="sequence conflict" description="In Ref. 1; AAA24301." evidence="18" ref="1">
    <original>T</original>
    <variation>N</variation>
    <location>
        <position position="252"/>
    </location>
</feature>
<feature type="sequence conflict" description="In Ref. 1; AAA24301." evidence="18" ref="1">
    <original>TLSTD</original>
    <variation>AFPR</variation>
    <location>
        <begin position="256"/>
        <end position="260"/>
    </location>
</feature>
<feature type="sequence conflict" description="In Ref. 1; AAA24301." evidence="18" ref="1">
    <original>FEGGC</original>
    <variation>LKAAG</variation>
    <location>
        <begin position="281"/>
        <end position="285"/>
    </location>
</feature>
<feature type="sequence conflict" description="In Ref. 1; AAA24301." evidence="18" ref="1">
    <original>NAIRRD</original>
    <variation>KLSVVM</variation>
    <location>
        <begin position="302"/>
        <end position="307"/>
    </location>
</feature>
<feature type="sequence conflict" description="In Ref. 1; AAA24301." evidence="18" ref="1">
    <original>K</original>
    <variation>R</variation>
    <location>
        <position position="346"/>
    </location>
</feature>
<feature type="sequence conflict" description="In Ref. 1; AAA24301." evidence="18" ref="1">
    <original>ATKVIF</original>
    <variation>GRRLSL</variation>
    <location>
        <begin position="354"/>
        <end position="359"/>
    </location>
</feature>
<feature type="sequence conflict" description="In Ref. 1; AAA24301." evidence="18" ref="1">
    <original>D</original>
    <variation>H</variation>
    <location>
        <position position="363"/>
    </location>
</feature>
<feature type="sequence conflict" description="In Ref. 1; AAA24301." evidence="18" ref="1">
    <original>T</original>
    <variation>S</variation>
    <location>
        <position position="446"/>
    </location>
</feature>
<feature type="sequence conflict" description="In Ref. 1; AAA24301." evidence="18" ref="1">
    <original>R</original>
    <variation>S</variation>
    <location>
        <position position="449"/>
    </location>
</feature>
<feature type="sequence conflict" description="In Ref. 4." evidence="18" ref="4">
    <original>DAILNGSL</original>
    <variation>RRHPQRFV</variation>
    <location>
        <begin position="460"/>
        <end position="467"/>
    </location>
</feature>
<feature type="sequence conflict" description="In Ref. 4." evidence="18" ref="4">
    <original>T</original>
    <variation>R</variation>
    <location>
        <position position="499"/>
    </location>
</feature>
<feature type="turn" evidence="19">
    <location>
        <begin position="5"/>
        <end position="7"/>
    </location>
</feature>
<feature type="helix" evidence="22">
    <location>
        <begin position="9"/>
        <end position="13"/>
    </location>
</feature>
<feature type="turn" evidence="22">
    <location>
        <begin position="14"/>
        <end position="16"/>
    </location>
</feature>
<feature type="strand" evidence="22">
    <location>
        <begin position="23"/>
        <end position="26"/>
    </location>
</feature>
<feature type="helix" evidence="22">
    <location>
        <begin position="29"/>
        <end position="36"/>
    </location>
</feature>
<feature type="helix" evidence="22">
    <location>
        <begin position="43"/>
        <end position="45"/>
    </location>
</feature>
<feature type="strand" evidence="22">
    <location>
        <begin position="47"/>
        <end position="49"/>
    </location>
</feature>
<feature type="strand" evidence="22">
    <location>
        <begin position="55"/>
        <end position="57"/>
    </location>
</feature>
<feature type="helix" evidence="22">
    <location>
        <begin position="67"/>
        <end position="69"/>
    </location>
</feature>
<feature type="strand" evidence="22">
    <location>
        <begin position="70"/>
        <end position="73"/>
    </location>
</feature>
<feature type="turn" evidence="22">
    <location>
        <begin position="76"/>
        <end position="81"/>
    </location>
</feature>
<feature type="turn" evidence="22">
    <location>
        <begin position="85"/>
        <end position="87"/>
    </location>
</feature>
<feature type="strand" evidence="22">
    <location>
        <begin position="88"/>
        <end position="90"/>
    </location>
</feature>
<feature type="strand" evidence="22">
    <location>
        <begin position="95"/>
        <end position="97"/>
    </location>
</feature>
<feature type="helix" evidence="22">
    <location>
        <begin position="99"/>
        <end position="113"/>
    </location>
</feature>
<feature type="strand" evidence="22">
    <location>
        <begin position="118"/>
        <end position="128"/>
    </location>
</feature>
<feature type="turn" evidence="22">
    <location>
        <begin position="129"/>
        <end position="131"/>
    </location>
</feature>
<feature type="strand" evidence="22">
    <location>
        <begin position="133"/>
        <end position="141"/>
    </location>
</feature>
<feature type="helix" evidence="22">
    <location>
        <begin position="142"/>
        <end position="151"/>
    </location>
</feature>
<feature type="helix" evidence="22">
    <location>
        <begin position="157"/>
        <end position="161"/>
    </location>
</feature>
<feature type="strand" evidence="22">
    <location>
        <begin position="166"/>
        <end position="172"/>
    </location>
</feature>
<feature type="turn" evidence="22">
    <location>
        <begin position="178"/>
        <end position="184"/>
    </location>
</feature>
<feature type="strand" evidence="22">
    <location>
        <begin position="186"/>
        <end position="188"/>
    </location>
</feature>
<feature type="strand" evidence="22">
    <location>
        <begin position="190"/>
        <end position="194"/>
    </location>
</feature>
<feature type="turn" evidence="22">
    <location>
        <begin position="195"/>
        <end position="198"/>
    </location>
</feature>
<feature type="strand" evidence="22">
    <location>
        <begin position="199"/>
        <end position="204"/>
    </location>
</feature>
<feature type="helix" evidence="22">
    <location>
        <begin position="210"/>
        <end position="222"/>
    </location>
</feature>
<feature type="helix" evidence="22">
    <location>
        <begin position="224"/>
        <end position="226"/>
    </location>
</feature>
<feature type="strand" evidence="22">
    <location>
        <begin position="229"/>
        <end position="231"/>
    </location>
</feature>
<feature type="strand" evidence="22">
    <location>
        <begin position="233"/>
        <end position="237"/>
    </location>
</feature>
<feature type="strand" evidence="22">
    <location>
        <begin position="243"/>
        <end position="247"/>
    </location>
</feature>
<feature type="helix" evidence="22">
    <location>
        <begin position="254"/>
        <end position="258"/>
    </location>
</feature>
<feature type="strand" evidence="22">
    <location>
        <begin position="263"/>
        <end position="269"/>
    </location>
</feature>
<feature type="strand" evidence="22">
    <location>
        <begin position="271"/>
        <end position="273"/>
    </location>
</feature>
<feature type="strand" evidence="22">
    <location>
        <begin position="278"/>
        <end position="281"/>
    </location>
</feature>
<feature type="strand" evidence="22">
    <location>
        <begin position="283"/>
        <end position="288"/>
    </location>
</feature>
<feature type="turn" evidence="22">
    <location>
        <begin position="294"/>
        <end position="296"/>
    </location>
</feature>
<feature type="helix" evidence="22">
    <location>
        <begin position="298"/>
        <end position="302"/>
    </location>
</feature>
<feature type="strand" evidence="22">
    <location>
        <begin position="309"/>
        <end position="312"/>
    </location>
</feature>
<feature type="strand" evidence="20">
    <location>
        <begin position="314"/>
        <end position="316"/>
    </location>
</feature>
<feature type="turn" evidence="20">
    <location>
        <begin position="317"/>
        <end position="319"/>
    </location>
</feature>
<feature type="strand" evidence="20">
    <location>
        <begin position="320"/>
        <end position="322"/>
    </location>
</feature>
<feature type="strand" evidence="22">
    <location>
        <begin position="333"/>
        <end position="337"/>
    </location>
</feature>
<feature type="helix" evidence="22">
    <location>
        <begin position="338"/>
        <end position="340"/>
    </location>
</feature>
<feature type="strand" evidence="22">
    <location>
        <begin position="341"/>
        <end position="344"/>
    </location>
</feature>
<feature type="strand" evidence="22">
    <location>
        <begin position="347"/>
        <end position="352"/>
    </location>
</feature>
<feature type="strand" evidence="22">
    <location>
        <begin position="354"/>
        <end position="361"/>
    </location>
</feature>
<feature type="strand" evidence="22">
    <location>
        <begin position="370"/>
        <end position="373"/>
    </location>
</feature>
<feature type="helix" evidence="22">
    <location>
        <begin position="376"/>
        <end position="385"/>
    </location>
</feature>
<feature type="strand" evidence="22">
    <location>
        <begin position="387"/>
        <end position="390"/>
    </location>
</feature>
<feature type="helix" evidence="21">
    <location>
        <begin position="394"/>
        <end position="396"/>
    </location>
</feature>
<feature type="strand" evidence="22">
    <location>
        <begin position="402"/>
        <end position="405"/>
    </location>
</feature>
<feature type="helix" evidence="22">
    <location>
        <begin position="407"/>
        <end position="409"/>
    </location>
</feature>
<feature type="helix" evidence="22">
    <location>
        <begin position="411"/>
        <end position="413"/>
    </location>
</feature>
<feature type="helix" evidence="22">
    <location>
        <begin position="418"/>
        <end position="432"/>
    </location>
</feature>
<feature type="strand" evidence="22">
    <location>
        <begin position="435"/>
        <end position="440"/>
    </location>
</feature>
<feature type="strand" evidence="21">
    <location>
        <begin position="447"/>
        <end position="449"/>
    </location>
</feature>
<feature type="helix" evidence="22">
    <location>
        <begin position="452"/>
        <end position="463"/>
    </location>
</feature>
<feature type="turn" evidence="22">
    <location>
        <begin position="464"/>
        <end position="469"/>
    </location>
</feature>
<feature type="strand" evidence="22">
    <location>
        <begin position="472"/>
        <end position="475"/>
    </location>
</feature>
<feature type="turn" evidence="22">
    <location>
        <begin position="476"/>
        <end position="479"/>
    </location>
</feature>
<feature type="strand" evidence="22">
    <location>
        <begin position="480"/>
        <end position="484"/>
    </location>
</feature>
<feature type="helix" evidence="22">
    <location>
        <begin position="491"/>
        <end position="493"/>
    </location>
</feature>
<feature type="helix" evidence="22">
    <location>
        <begin position="496"/>
        <end position="499"/>
    </location>
</feature>
<feature type="strand" evidence="21">
    <location>
        <begin position="500"/>
        <end position="502"/>
    </location>
</feature>
<feature type="helix" evidence="22">
    <location>
        <begin position="504"/>
        <end position="521"/>
    </location>
</feature>
<feature type="helix" evidence="22">
    <location>
        <begin position="522"/>
        <end position="526"/>
    </location>
</feature>
<feature type="helix" evidence="22">
    <location>
        <begin position="528"/>
        <end position="533"/>
    </location>
</feature>
<feature type="helix" evidence="22">
    <location>
        <begin position="534"/>
        <end position="536"/>
    </location>
</feature>
<gene>
    <name evidence="2" type="primary">pckA</name>
    <name type="synonym">pck</name>
    <name type="ordered locus">b3403</name>
    <name type="ordered locus">JW3366</name>
</gene>
<organism>
    <name type="scientific">Escherichia coli (strain K12)</name>
    <dbReference type="NCBI Taxonomy" id="83333"/>
    <lineage>
        <taxon>Bacteria</taxon>
        <taxon>Pseudomonadati</taxon>
        <taxon>Pseudomonadota</taxon>
        <taxon>Gammaproteobacteria</taxon>
        <taxon>Enterobacterales</taxon>
        <taxon>Enterobacteriaceae</taxon>
        <taxon>Escherichia</taxon>
    </lineage>
</organism>
<keyword id="KW-0002">3D-structure</keyword>
<keyword id="KW-0007">Acetylation</keyword>
<keyword id="KW-0021">Allosteric enzyme</keyword>
<keyword id="KW-0067">ATP-binding</keyword>
<keyword id="KW-0106">Calcium</keyword>
<keyword id="KW-0963">Cytoplasm</keyword>
<keyword id="KW-0210">Decarboxylase</keyword>
<keyword id="KW-0903">Direct protein sequencing</keyword>
<keyword id="KW-0312">Gluconeogenesis</keyword>
<keyword id="KW-0456">Lyase</keyword>
<keyword id="KW-0460">Magnesium</keyword>
<keyword id="KW-0464">Manganese</keyword>
<keyword id="KW-0479">Metal-binding</keyword>
<keyword id="KW-0547">Nucleotide-binding</keyword>
<keyword id="KW-1185">Reference proteome</keyword>
<protein>
    <recommendedName>
        <fullName evidence="2">Phosphoenolpyruvate carboxykinase (ATP)</fullName>
        <shortName evidence="2">PCK</shortName>
        <shortName evidence="2">PEP carboxykinase</shortName>
        <shortName evidence="2">PEPCK</shortName>
        <ecNumber evidence="2">4.1.1.49</ecNumber>
    </recommendedName>
</protein>
<name>PCKA_ECOLI</name>